<name>PSBK_STIHE</name>
<dbReference type="EMBL" id="DQ630521">
    <property type="protein sequence ID" value="ABF60175.1"/>
    <property type="molecule type" value="Genomic_DNA"/>
</dbReference>
<dbReference type="RefSeq" id="YP_764433.1">
    <property type="nucleotide sequence ID" value="NC_008372.1"/>
</dbReference>
<dbReference type="SMR" id="Q06SD3"/>
<dbReference type="GeneID" id="4308418"/>
<dbReference type="GO" id="GO:0009535">
    <property type="term" value="C:chloroplast thylakoid membrane"/>
    <property type="evidence" value="ECO:0007669"/>
    <property type="project" value="UniProtKB-SubCell"/>
</dbReference>
<dbReference type="GO" id="GO:0009539">
    <property type="term" value="C:photosystem II reaction center"/>
    <property type="evidence" value="ECO:0007669"/>
    <property type="project" value="InterPro"/>
</dbReference>
<dbReference type="GO" id="GO:0015979">
    <property type="term" value="P:photosynthesis"/>
    <property type="evidence" value="ECO:0007669"/>
    <property type="project" value="UniProtKB-UniRule"/>
</dbReference>
<dbReference type="HAMAP" id="MF_00441">
    <property type="entry name" value="PSII_PsbK"/>
    <property type="match status" value="1"/>
</dbReference>
<dbReference type="InterPro" id="IPR003687">
    <property type="entry name" value="PSII_PsbK"/>
</dbReference>
<dbReference type="InterPro" id="IPR037270">
    <property type="entry name" value="PSII_PsbK_sf"/>
</dbReference>
<dbReference type="NCBIfam" id="NF002715">
    <property type="entry name" value="PRK02553.1"/>
    <property type="match status" value="1"/>
</dbReference>
<dbReference type="PANTHER" id="PTHR35325">
    <property type="match status" value="1"/>
</dbReference>
<dbReference type="PANTHER" id="PTHR35325:SF1">
    <property type="entry name" value="PHOTOSYSTEM II REACTION CENTER PROTEIN K"/>
    <property type="match status" value="1"/>
</dbReference>
<dbReference type="Pfam" id="PF02533">
    <property type="entry name" value="PsbK"/>
    <property type="match status" value="1"/>
</dbReference>
<dbReference type="SUPFAM" id="SSF161037">
    <property type="entry name" value="Photosystem II reaction center protein K, PsbK"/>
    <property type="match status" value="1"/>
</dbReference>
<evidence type="ECO:0000255" key="1">
    <source>
        <dbReference type="HAMAP-Rule" id="MF_00441"/>
    </source>
</evidence>
<gene>
    <name evidence="1" type="primary">psbK</name>
</gene>
<geneLocation type="chloroplast"/>
<accession>Q06SD3</accession>
<organism>
    <name type="scientific">Stigeoclonium helveticum</name>
    <name type="common">Green alga</name>
    <dbReference type="NCBI Taxonomy" id="55999"/>
    <lineage>
        <taxon>Eukaryota</taxon>
        <taxon>Viridiplantae</taxon>
        <taxon>Chlorophyta</taxon>
        <taxon>core chlorophytes</taxon>
        <taxon>Chlorophyceae</taxon>
        <taxon>OCC clade</taxon>
        <taxon>Chaetophorales</taxon>
        <taxon>Chaetophoraceae</taxon>
        <taxon>Stigeoclonium</taxon>
    </lineage>
</organism>
<protein>
    <recommendedName>
        <fullName evidence="1">Photosystem II reaction center protein K</fullName>
        <shortName evidence="1">PSII-K</shortName>
    </recommendedName>
</protein>
<comment type="function">
    <text evidence="1">One of the components of the core complex of photosystem II (PSII). PSII is a light-driven water:plastoquinone oxidoreductase that uses light energy to abstract electrons from H(2)O, generating O(2) and a proton gradient subsequently used for ATP formation. It consists of a core antenna complex that captures photons, and an electron transfer chain that converts photonic excitation into a charge separation.</text>
</comment>
<comment type="subunit">
    <text evidence="1">PSII is composed of 1 copy each of membrane proteins PsbA, PsbB, PsbC, PsbD, PsbE, PsbF, PsbH, PsbI, PsbJ, PsbK, PsbL, PsbM, PsbT, PsbX, PsbY, PsbZ, Psb30/Ycf12, at least 3 peripheral proteins of the oxygen-evolving complex and a large number of cofactors. It forms dimeric complexes.</text>
</comment>
<comment type="subcellular location">
    <subcellularLocation>
        <location evidence="1">Plastid</location>
        <location evidence="1">Chloroplast thylakoid membrane</location>
        <topology evidence="1">Single-pass membrane protein</topology>
    </subcellularLocation>
</comment>
<comment type="similarity">
    <text evidence="1">Belongs to the PsbK family.</text>
</comment>
<feature type="propeptide" id="PRO_0000276186" evidence="1">
    <location>
        <begin position="1"/>
        <end position="9"/>
    </location>
</feature>
<feature type="chain" id="PRO_0000276187" description="Photosystem II reaction center protein K" evidence="1">
    <location>
        <begin position="10"/>
        <end position="46"/>
    </location>
</feature>
<feature type="transmembrane region" description="Helical" evidence="1">
    <location>
        <begin position="25"/>
        <end position="45"/>
    </location>
</feature>
<reference key="1">
    <citation type="journal article" date="2006" name="Mol. Genet. Genomics">
        <title>Distinctive architecture of the chloroplast genome in the chlorophycean green alga Stigeoclonium helveticum.</title>
        <authorList>
            <person name="Belanger A.-S."/>
            <person name="Brouard J.-S."/>
            <person name="Charlebois P."/>
            <person name="Otis C."/>
            <person name="Lemieux C."/>
            <person name="Turmel M."/>
        </authorList>
    </citation>
    <scope>NUCLEOTIDE SEQUENCE [LARGE SCALE GENOMIC DNA]</scope>
    <source>
        <strain>UTEX 441</strain>
    </source>
</reference>
<proteinExistence type="inferred from homology"/>
<sequence>MESILMIFAKLPEAYAPFDPIVDVLPVIPVLFLLLAFVWQAAVSFR</sequence>
<keyword id="KW-0150">Chloroplast</keyword>
<keyword id="KW-0472">Membrane</keyword>
<keyword id="KW-0602">Photosynthesis</keyword>
<keyword id="KW-0604">Photosystem II</keyword>
<keyword id="KW-0934">Plastid</keyword>
<keyword id="KW-0674">Reaction center</keyword>
<keyword id="KW-0793">Thylakoid</keyword>
<keyword id="KW-0812">Transmembrane</keyword>
<keyword id="KW-1133">Transmembrane helix</keyword>